<gene>
    <name evidence="1" type="primary">hutU</name>
    <name type="ordered locus">BA_3711</name>
    <name type="ordered locus">GBAA_3711</name>
    <name type="ordered locus">BAS3441</name>
</gene>
<sequence length="552" mass="60778">MEKVKQTIRAPRGTELQTKGWVQEAALRMLMNNLDPEVAEKPEELVVYGGIGRAARNWESYQAIVDSLKTLESDETLLVQSGKPVAIFKSHEDAPRVLLANSNLVPKWANWDHFRELEKKGLMMYGQMTAGSWIYIGTQGILQGTYETFGEAARQHFGGSLKGTLTLTAGLGGMGGAQPLAVTMNGGVVIAIDVDKRSIDRRIEKRYCDMYTESLEEALAVANEYKEKKEPISIGLLGNAAEILPELVKRNITPDLVTDQTSAHDPLNGYIPVGYTLEEAAKLREEDPERYVQLSKESMTKHVEAMLAMQEKGAITFDYGNNIRQVAFDEGLKNAFDFPGFVPAFIRPLFCEGKGPFRWVALSGDPEDIYKTDEVILREFADNEHLCNWIRMARQQVEFQGLPSRICWLGYGERAKFGRIINEMVANGELSAPIVIGRDHLDCGSVASPNRETEAMKDGSDSVADWPILNALINSVNGASWVSVHHGGGVGMGYSLHAGMVIVADGTEAAAKRIERVLTSDPGMGVVRHVDAGYDLAVETAKEKGVNIPMMK</sequence>
<dbReference type="EC" id="4.2.1.49" evidence="1"/>
<dbReference type="EMBL" id="AE016879">
    <property type="protein sequence ID" value="AAP27460.1"/>
    <property type="molecule type" value="Genomic_DNA"/>
</dbReference>
<dbReference type="EMBL" id="AE017334">
    <property type="protein sequence ID" value="AAT32819.1"/>
    <property type="molecule type" value="Genomic_DNA"/>
</dbReference>
<dbReference type="EMBL" id="AE017225">
    <property type="protein sequence ID" value="AAT55748.1"/>
    <property type="molecule type" value="Genomic_DNA"/>
</dbReference>
<dbReference type="RefSeq" id="NP_845974.1">
    <property type="nucleotide sequence ID" value="NC_003997.3"/>
</dbReference>
<dbReference type="RefSeq" id="WP_000416715.1">
    <property type="nucleotide sequence ID" value="NZ_WXXJ01000029.1"/>
</dbReference>
<dbReference type="RefSeq" id="YP_029697.1">
    <property type="nucleotide sequence ID" value="NC_005945.1"/>
</dbReference>
<dbReference type="SMR" id="Q81Y46"/>
<dbReference type="IntAct" id="Q81Y46">
    <property type="interactions" value="12"/>
</dbReference>
<dbReference type="STRING" id="261594.GBAA_3711"/>
<dbReference type="DNASU" id="1086197"/>
<dbReference type="GeneID" id="45023432"/>
<dbReference type="KEGG" id="ban:BA_3711"/>
<dbReference type="KEGG" id="banh:HYU01_18125"/>
<dbReference type="KEGG" id="bar:GBAA_3711"/>
<dbReference type="KEGG" id="bat:BAS3441"/>
<dbReference type="PATRIC" id="fig|198094.11.peg.3682"/>
<dbReference type="eggNOG" id="COG2987">
    <property type="taxonomic scope" value="Bacteria"/>
</dbReference>
<dbReference type="HOGENOM" id="CLU_018868_0_1_9"/>
<dbReference type="OMA" id="VHFQGLP"/>
<dbReference type="OrthoDB" id="9764874at2"/>
<dbReference type="UniPathway" id="UPA00379">
    <property type="reaction ID" value="UER00550"/>
</dbReference>
<dbReference type="Proteomes" id="UP000000427">
    <property type="component" value="Chromosome"/>
</dbReference>
<dbReference type="Proteomes" id="UP000000594">
    <property type="component" value="Chromosome"/>
</dbReference>
<dbReference type="GO" id="GO:0005737">
    <property type="term" value="C:cytoplasm"/>
    <property type="evidence" value="ECO:0007669"/>
    <property type="project" value="UniProtKB-SubCell"/>
</dbReference>
<dbReference type="GO" id="GO:0016153">
    <property type="term" value="F:urocanate hydratase activity"/>
    <property type="evidence" value="ECO:0007669"/>
    <property type="project" value="UniProtKB-UniRule"/>
</dbReference>
<dbReference type="GO" id="GO:0019556">
    <property type="term" value="P:L-histidine catabolic process to glutamate and formamide"/>
    <property type="evidence" value="ECO:0007669"/>
    <property type="project" value="UniProtKB-UniPathway"/>
</dbReference>
<dbReference type="GO" id="GO:0019557">
    <property type="term" value="P:L-histidine catabolic process to glutamate and formate"/>
    <property type="evidence" value="ECO:0007669"/>
    <property type="project" value="UniProtKB-UniPathway"/>
</dbReference>
<dbReference type="FunFam" id="3.40.50.10730:FF:000001">
    <property type="entry name" value="Urocanate hydratase"/>
    <property type="match status" value="1"/>
</dbReference>
<dbReference type="Gene3D" id="3.40.50.10730">
    <property type="entry name" value="Urocanase like domains"/>
    <property type="match status" value="1"/>
</dbReference>
<dbReference type="Gene3D" id="3.40.1770.10">
    <property type="entry name" value="Urocanase superfamily"/>
    <property type="match status" value="1"/>
</dbReference>
<dbReference type="HAMAP" id="MF_00577">
    <property type="entry name" value="HutU"/>
    <property type="match status" value="1"/>
</dbReference>
<dbReference type="InterPro" id="IPR055351">
    <property type="entry name" value="Urocanase"/>
</dbReference>
<dbReference type="InterPro" id="IPR023637">
    <property type="entry name" value="Urocanase-like"/>
</dbReference>
<dbReference type="InterPro" id="IPR035401">
    <property type="entry name" value="Urocanase_C"/>
</dbReference>
<dbReference type="InterPro" id="IPR038364">
    <property type="entry name" value="Urocanase_central_sf"/>
</dbReference>
<dbReference type="InterPro" id="IPR023636">
    <property type="entry name" value="Urocanase_CS"/>
</dbReference>
<dbReference type="InterPro" id="IPR035400">
    <property type="entry name" value="Urocanase_N"/>
</dbReference>
<dbReference type="InterPro" id="IPR035085">
    <property type="entry name" value="Urocanase_Rossmann-like"/>
</dbReference>
<dbReference type="InterPro" id="IPR036190">
    <property type="entry name" value="Urocanase_sf"/>
</dbReference>
<dbReference type="NCBIfam" id="TIGR01228">
    <property type="entry name" value="hutU"/>
    <property type="match status" value="1"/>
</dbReference>
<dbReference type="NCBIfam" id="NF003820">
    <property type="entry name" value="PRK05414.1"/>
    <property type="match status" value="1"/>
</dbReference>
<dbReference type="PANTHER" id="PTHR12216">
    <property type="entry name" value="UROCANATE HYDRATASE"/>
    <property type="match status" value="1"/>
</dbReference>
<dbReference type="PANTHER" id="PTHR12216:SF4">
    <property type="entry name" value="UROCANATE HYDRATASE"/>
    <property type="match status" value="1"/>
</dbReference>
<dbReference type="Pfam" id="PF01175">
    <property type="entry name" value="Urocanase"/>
    <property type="match status" value="1"/>
</dbReference>
<dbReference type="Pfam" id="PF17392">
    <property type="entry name" value="Urocanase_C"/>
    <property type="match status" value="1"/>
</dbReference>
<dbReference type="Pfam" id="PF17391">
    <property type="entry name" value="Urocanase_N"/>
    <property type="match status" value="1"/>
</dbReference>
<dbReference type="PIRSF" id="PIRSF001423">
    <property type="entry name" value="Urocanate_hydrat"/>
    <property type="match status" value="1"/>
</dbReference>
<dbReference type="SUPFAM" id="SSF111326">
    <property type="entry name" value="Urocanase"/>
    <property type="match status" value="1"/>
</dbReference>
<dbReference type="PROSITE" id="PS01233">
    <property type="entry name" value="UROCANASE"/>
    <property type="match status" value="1"/>
</dbReference>
<reference key="1">
    <citation type="journal article" date="2003" name="Nature">
        <title>The genome sequence of Bacillus anthracis Ames and comparison to closely related bacteria.</title>
        <authorList>
            <person name="Read T.D."/>
            <person name="Peterson S.N."/>
            <person name="Tourasse N.J."/>
            <person name="Baillie L.W."/>
            <person name="Paulsen I.T."/>
            <person name="Nelson K.E."/>
            <person name="Tettelin H."/>
            <person name="Fouts D.E."/>
            <person name="Eisen J.A."/>
            <person name="Gill S.R."/>
            <person name="Holtzapple E.K."/>
            <person name="Okstad O.A."/>
            <person name="Helgason E."/>
            <person name="Rilstone J."/>
            <person name="Wu M."/>
            <person name="Kolonay J.F."/>
            <person name="Beanan M.J."/>
            <person name="Dodson R.J."/>
            <person name="Brinkac L.M."/>
            <person name="Gwinn M.L."/>
            <person name="DeBoy R.T."/>
            <person name="Madpu R."/>
            <person name="Daugherty S.C."/>
            <person name="Durkin A.S."/>
            <person name="Haft D.H."/>
            <person name="Nelson W.C."/>
            <person name="Peterson J.D."/>
            <person name="Pop M."/>
            <person name="Khouri H.M."/>
            <person name="Radune D."/>
            <person name="Benton J.L."/>
            <person name="Mahamoud Y."/>
            <person name="Jiang L."/>
            <person name="Hance I.R."/>
            <person name="Weidman J.F."/>
            <person name="Berry K.J."/>
            <person name="Plaut R.D."/>
            <person name="Wolf A.M."/>
            <person name="Watkins K.L."/>
            <person name="Nierman W.C."/>
            <person name="Hazen A."/>
            <person name="Cline R.T."/>
            <person name="Redmond C."/>
            <person name="Thwaite J.E."/>
            <person name="White O."/>
            <person name="Salzberg S.L."/>
            <person name="Thomason B."/>
            <person name="Friedlander A.M."/>
            <person name="Koehler T.M."/>
            <person name="Hanna P.C."/>
            <person name="Kolstoe A.-B."/>
            <person name="Fraser C.M."/>
        </authorList>
    </citation>
    <scope>NUCLEOTIDE SEQUENCE [LARGE SCALE GENOMIC DNA]</scope>
    <source>
        <strain>Ames / isolate Porton</strain>
    </source>
</reference>
<reference key="2">
    <citation type="journal article" date="2009" name="J. Bacteriol.">
        <title>The complete genome sequence of Bacillus anthracis Ames 'Ancestor'.</title>
        <authorList>
            <person name="Ravel J."/>
            <person name="Jiang L."/>
            <person name="Stanley S.T."/>
            <person name="Wilson M.R."/>
            <person name="Decker R.S."/>
            <person name="Read T.D."/>
            <person name="Worsham P."/>
            <person name="Keim P.S."/>
            <person name="Salzberg S.L."/>
            <person name="Fraser-Liggett C.M."/>
            <person name="Rasko D.A."/>
        </authorList>
    </citation>
    <scope>NUCLEOTIDE SEQUENCE [LARGE SCALE GENOMIC DNA]</scope>
    <source>
        <strain>Ames ancestor</strain>
    </source>
</reference>
<reference key="3">
    <citation type="submission" date="2004-01" db="EMBL/GenBank/DDBJ databases">
        <title>Complete genome sequence of Bacillus anthracis Sterne.</title>
        <authorList>
            <person name="Brettin T.S."/>
            <person name="Bruce D."/>
            <person name="Challacombe J.F."/>
            <person name="Gilna P."/>
            <person name="Han C."/>
            <person name="Hill K."/>
            <person name="Hitchcock P."/>
            <person name="Jackson P."/>
            <person name="Keim P."/>
            <person name="Longmire J."/>
            <person name="Lucas S."/>
            <person name="Okinaka R."/>
            <person name="Richardson P."/>
            <person name="Rubin E."/>
            <person name="Tice H."/>
        </authorList>
    </citation>
    <scope>NUCLEOTIDE SEQUENCE [LARGE SCALE GENOMIC DNA]</scope>
    <source>
        <strain>Sterne</strain>
    </source>
</reference>
<accession>Q81Y46</accession>
<accession>Q6HVE1</accession>
<accession>Q6KPL0</accession>
<comment type="function">
    <text evidence="1">Catalyzes the conversion of urocanate to 4-imidazolone-5-propionate.</text>
</comment>
<comment type="catalytic activity">
    <reaction evidence="1">
        <text>4-imidazolone-5-propanoate = trans-urocanate + H2O</text>
        <dbReference type="Rhea" id="RHEA:13101"/>
        <dbReference type="ChEBI" id="CHEBI:15377"/>
        <dbReference type="ChEBI" id="CHEBI:17771"/>
        <dbReference type="ChEBI" id="CHEBI:77893"/>
        <dbReference type="EC" id="4.2.1.49"/>
    </reaction>
</comment>
<comment type="cofactor">
    <cofactor evidence="1">
        <name>NAD(+)</name>
        <dbReference type="ChEBI" id="CHEBI:57540"/>
    </cofactor>
    <text evidence="1">Binds 1 NAD(+) per subunit.</text>
</comment>
<comment type="pathway">
    <text evidence="1">Amino-acid degradation; L-histidine degradation into L-glutamate; N-formimidoyl-L-glutamate from L-histidine: step 2/3.</text>
</comment>
<comment type="subcellular location">
    <subcellularLocation>
        <location evidence="1">Cytoplasm</location>
    </subcellularLocation>
</comment>
<comment type="similarity">
    <text evidence="1">Belongs to the urocanase family.</text>
</comment>
<organism>
    <name type="scientific">Bacillus anthracis</name>
    <dbReference type="NCBI Taxonomy" id="1392"/>
    <lineage>
        <taxon>Bacteria</taxon>
        <taxon>Bacillati</taxon>
        <taxon>Bacillota</taxon>
        <taxon>Bacilli</taxon>
        <taxon>Bacillales</taxon>
        <taxon>Bacillaceae</taxon>
        <taxon>Bacillus</taxon>
        <taxon>Bacillus cereus group</taxon>
    </lineage>
</organism>
<evidence type="ECO:0000255" key="1">
    <source>
        <dbReference type="HAMAP-Rule" id="MF_00577"/>
    </source>
</evidence>
<name>HUTU_BACAN</name>
<proteinExistence type="inferred from homology"/>
<feature type="chain" id="PRO_0000207331" description="Urocanate hydratase">
    <location>
        <begin position="1"/>
        <end position="552"/>
    </location>
</feature>
<feature type="active site" evidence="1">
    <location>
        <position position="407"/>
    </location>
</feature>
<feature type="binding site" evidence="1">
    <location>
        <begin position="49"/>
        <end position="50"/>
    </location>
    <ligand>
        <name>NAD(+)</name>
        <dbReference type="ChEBI" id="CHEBI:57540"/>
    </ligand>
</feature>
<feature type="binding site" evidence="1">
    <location>
        <position position="127"/>
    </location>
    <ligand>
        <name>NAD(+)</name>
        <dbReference type="ChEBI" id="CHEBI:57540"/>
    </ligand>
</feature>
<feature type="binding site" evidence="1">
    <location>
        <begin position="173"/>
        <end position="175"/>
    </location>
    <ligand>
        <name>NAD(+)</name>
        <dbReference type="ChEBI" id="CHEBI:57540"/>
    </ligand>
</feature>
<feature type="binding site" evidence="1">
    <location>
        <position position="193"/>
    </location>
    <ligand>
        <name>NAD(+)</name>
        <dbReference type="ChEBI" id="CHEBI:57540"/>
    </ligand>
</feature>
<feature type="binding site" evidence="1">
    <location>
        <begin position="239"/>
        <end position="240"/>
    </location>
    <ligand>
        <name>NAD(+)</name>
        <dbReference type="ChEBI" id="CHEBI:57540"/>
    </ligand>
</feature>
<feature type="binding site" evidence="1">
    <location>
        <begin position="260"/>
        <end position="264"/>
    </location>
    <ligand>
        <name>NAD(+)</name>
        <dbReference type="ChEBI" id="CHEBI:57540"/>
    </ligand>
</feature>
<feature type="binding site" evidence="1">
    <location>
        <begin position="270"/>
        <end position="271"/>
    </location>
    <ligand>
        <name>NAD(+)</name>
        <dbReference type="ChEBI" id="CHEBI:57540"/>
    </ligand>
</feature>
<feature type="binding site" evidence="1">
    <location>
        <position position="319"/>
    </location>
    <ligand>
        <name>NAD(+)</name>
        <dbReference type="ChEBI" id="CHEBI:57540"/>
    </ligand>
</feature>
<feature type="binding site" evidence="1">
    <location>
        <position position="489"/>
    </location>
    <ligand>
        <name>NAD(+)</name>
        <dbReference type="ChEBI" id="CHEBI:57540"/>
    </ligand>
</feature>
<keyword id="KW-0963">Cytoplasm</keyword>
<keyword id="KW-0369">Histidine metabolism</keyword>
<keyword id="KW-0456">Lyase</keyword>
<keyword id="KW-0520">NAD</keyword>
<keyword id="KW-1185">Reference proteome</keyword>
<protein>
    <recommendedName>
        <fullName evidence="1">Urocanate hydratase</fullName>
        <shortName evidence="1">Urocanase</shortName>
        <ecNumber evidence="1">4.2.1.49</ecNumber>
    </recommendedName>
    <alternativeName>
        <fullName evidence="1">Imidazolonepropionate hydrolase</fullName>
    </alternativeName>
</protein>